<keyword id="KW-0964">Secreted</keyword>
<proteinExistence type="evidence at transcript level"/>
<sequence length="242" mass="27318">MGKISDLNYSQHITLADNFKQKNEALDTWYVGMNDFARIAGGQNSRSNILSPRAFLEFLAKIFTLGYVDFSKRSNEAGRNMMAHIEFSSYSKDTDGNEKMKFYMNNPEGERADLSKVKIEITLASASTKGIREGHTVIIFKQSDGSTNRYEGKSFERKDDSSLHLITNKVLACYQREANKKIARLLNNHQKLNNIQELNDSQELNNSQKLNNSQELNNSQVSCKGSVDSTITDLLEKALNKG</sequence>
<dbReference type="EMBL" id="CM001474">
    <property type="protein sequence ID" value="EID64451.1"/>
    <property type="molecule type" value="Genomic_DNA"/>
</dbReference>
<dbReference type="EMBL" id="CP037923">
    <property type="protein sequence ID" value="QCC33155.1"/>
    <property type="molecule type" value="Genomic_DNA"/>
</dbReference>
<dbReference type="Proteomes" id="UP000296678">
    <property type="component" value="Chromosome"/>
</dbReference>
<dbReference type="GO" id="GO:0005576">
    <property type="term" value="C:extracellular region"/>
    <property type="evidence" value="ECO:0007669"/>
    <property type="project" value="UniProtKB-SubCell"/>
</dbReference>
<organism>
    <name type="scientific">Shigella flexneri serotype 5a (strain M90T)</name>
    <dbReference type="NCBI Taxonomy" id="1086030"/>
    <lineage>
        <taxon>Bacteria</taxon>
        <taxon>Pseudomonadati</taxon>
        <taxon>Pseudomonadota</taxon>
        <taxon>Gammaproteobacteria</taxon>
        <taxon>Enterobacterales</taxon>
        <taxon>Enterobacteriaceae</taxon>
        <taxon>Shigella</taxon>
    </lineage>
</organism>
<comment type="function">
    <text evidence="2">May contribute to pathogenesis, although some of its characteristics suggest it is a fossil gene.</text>
</comment>
<comment type="subcellular location">
    <subcellularLocation>
        <location evidence="2">Secreted</location>
    </subcellularLocation>
    <text evidence="2">Secreted via the type 3 secretion system (T3SS) (PubMed:35582904). Secretion depends on the N-terminus and is chaperone-independent (PubMed:35582904).</text>
</comment>
<comment type="induction">
    <text evidence="1 2">Member of the type 3 secretion system (T3SS) regulon (PubMed:30905752). Expressed at low levels and only when the T3SS is active, in a MxiE-dependent manner (PubMed:30905752, PubMed:35582904). Expression requires MxiE, IgpC and a MxiE box (PubMed:35582904).</text>
</comment>
<gene>
    <name evidence="4" type="primary">icaR</name>
    <name evidence="3" type="synonym">gem3</name>
    <name evidence="4" type="synonym">yjgL</name>
    <name evidence="6" type="ORF">EKN05_017705</name>
    <name evidence="5" type="ORF">SF5M90T_4150</name>
</gene>
<reference key="1">
    <citation type="journal article" date="2012" name="J. Bacteriol.">
        <title>Genome sequence of Shigella flexneri serotype 5a strain M90T Sm.</title>
        <authorList>
            <person name="Onodera N.T."/>
            <person name="Ryu J."/>
            <person name="Durbic T."/>
            <person name="Nislow C."/>
            <person name="Archibald J.M."/>
            <person name="Rohde J.R."/>
        </authorList>
    </citation>
    <scope>NUCLEOTIDE SEQUENCE [LARGE SCALE GENOMIC DNA]</scope>
    <source>
        <strain>M90T / Serotype 5a</strain>
    </source>
</reference>
<reference key="2">
    <citation type="submission" date="2019-03" db="EMBL/GenBank/DDBJ databases">
        <title>Complete genome sequence and annotation of the laboratory reference strain Shigella flexneri 5a M90T and genome-wide transcription start site determination.</title>
        <authorList>
            <person name="Cervantes-Rivera R."/>
            <person name="Puhar A."/>
        </authorList>
    </citation>
    <scope>NUCLEOTIDE SEQUENCE [LARGE SCALE GENOMIC DNA]</scope>
    <source>
        <strain>M90T / Serotype 5a</strain>
    </source>
</reference>
<reference key="3">
    <citation type="journal article" date="2020" name="Methods">
        <title>RNA-Seq analysis of the T3SA regulon in Shigella flexneri reveals two new chromosomal genes upregulated in the on-state.</title>
        <authorList>
            <person name="Silue N."/>
            <person name="Marcantonio E."/>
            <person name="Campbell-Valois F.X."/>
        </authorList>
    </citation>
    <scope>INDUCTION</scope>
    <source>
        <strain>M90T / Serotype 5a</strain>
    </source>
</reference>
<reference key="4">
    <citation type="journal article" date="2022" name="MSphere">
        <title>icaR and icaT are ancient chromosome genes encoding substrates of the type III secretion apparatus in Shigella flexneri.</title>
        <authorList>
            <person name="Silue N."/>
            <person name="Campbell-Valois F.X."/>
        </authorList>
    </citation>
    <scope>FUNCTION</scope>
    <scope>SUBCELLULAR LOCATION</scope>
    <scope>INDUCTION</scope>
    <source>
        <strain>M90T / Serotype 5a</strain>
    </source>
</reference>
<protein>
    <recommendedName>
        <fullName evidence="4">Invasion chromosome antigen R</fullName>
    </recommendedName>
</protein>
<evidence type="ECO:0000269" key="1">
    <source>
    </source>
</evidence>
<evidence type="ECO:0000269" key="2">
    <source>
    </source>
</evidence>
<evidence type="ECO:0000303" key="3">
    <source>
    </source>
</evidence>
<evidence type="ECO:0000303" key="4">
    <source>
    </source>
</evidence>
<evidence type="ECO:0000312" key="5">
    <source>
        <dbReference type="EMBL" id="EID64451.1"/>
    </source>
</evidence>
<evidence type="ECO:0000312" key="6">
    <source>
        <dbReference type="EMBL" id="QCC33155.1"/>
    </source>
</evidence>
<accession>A0A4P7TQN2</accession>
<name>ICAR_SHIFM</name>
<feature type="chain" id="PRO_0000458650" description="Invasion chromosome antigen R">
    <location>
        <begin position="1"/>
        <end position="242"/>
    </location>
</feature>